<sequence>MLSFLSSNISNARQTLAQVLNFALVLSSAFMMWKGLSVFTGSSSPIVVVLSGSMEPAFQRGDLLFLENRRPRAEIGEIVVYNVRGKDIPIVHRVVRTYPEIEGKTKQVKEISDASSTPSNMLLTKGDNNVADDTELYARGQDYLHREEDIVGSVRGYIPMVGYVTIMLSEHPWLKSVLLGIMGVMVMLQRE</sequence>
<keyword id="KW-0256">Endoplasmic reticulum</keyword>
<keyword id="KW-0378">Hydrolase</keyword>
<keyword id="KW-0472">Membrane</keyword>
<keyword id="KW-0645">Protease</keyword>
<keyword id="KW-1185">Reference proteome</keyword>
<keyword id="KW-0735">Signal-anchor</keyword>
<keyword id="KW-0812">Transmembrane</keyword>
<keyword id="KW-1133">Transmembrane helix</keyword>
<evidence type="ECO:0000250" key="1">
    <source>
        <dbReference type="UniProtKB" id="P15367"/>
    </source>
</evidence>
<evidence type="ECO:0000250" key="2">
    <source>
        <dbReference type="UniProtKB" id="P67812"/>
    </source>
</evidence>
<evidence type="ECO:0000255" key="3"/>
<evidence type="ECO:0000305" key="4"/>
<comment type="function">
    <text evidence="1 2">Catalytic component of the signal peptidase complex (SPC) which catalyzes the cleavage of N-terminal signal sequences from nascent proteins as they are translocated into the lumen of the endoplasmic reticulum (By similarity). Specifically cleaves N-terminal signal peptides that contain a hydrophobic alpha-helix (h-region) shorter than 18-20 amino acids (By similarity).</text>
</comment>
<comment type="catalytic activity">
    <reaction evidence="1">
        <text>Cleavage of hydrophobic, N-terminal signal or leader sequences from secreted and periplasmic proteins.</text>
        <dbReference type="EC" id="3.4.21.89"/>
    </reaction>
</comment>
<comment type="subunit">
    <text evidence="1 2">Component of the signal peptidase complex (SPC) composed of a catalytic subunit SEC11 and three accessory subunits SPC1, SPC2 and SPC3 (By similarity). The complex induces a local thinning of the ER membrane which is used to measure the length of the signal peptide (SP) h-region of protein substrates. This ensures the selectivity of the complex towards h-regions shorter than 18-20 amino acids (By similarity). SPC associates with the translocon complex (By similarity).</text>
</comment>
<comment type="subcellular location">
    <subcellularLocation>
        <location evidence="1">Endoplasmic reticulum membrane</location>
        <topology evidence="1">Single-pass type II membrane protein</topology>
    </subcellularLocation>
</comment>
<comment type="domain">
    <text evidence="2">The C-terminal short (CTS) helix is essential for catalytic activity. It may be accommodated as a transmembrane helix in the thinned membrane environment of the complex, similarly to the signal peptide in the complex substrates.</text>
</comment>
<comment type="similarity">
    <text evidence="4">Belongs to the peptidase S26B family.</text>
</comment>
<dbReference type="EC" id="3.4.21.89" evidence="1"/>
<dbReference type="EMBL" id="CH476598">
    <property type="protein sequence ID" value="EAU35911.1"/>
    <property type="molecule type" value="Genomic_DNA"/>
</dbReference>
<dbReference type="RefSeq" id="XP_001213287.1">
    <property type="nucleotide sequence ID" value="XM_001213287.1"/>
</dbReference>
<dbReference type="SMR" id="Q0CQC5"/>
<dbReference type="STRING" id="341663.Q0CQC5"/>
<dbReference type="MEROPS" id="S26.010"/>
<dbReference type="EnsemblFungi" id="EAU35911">
    <property type="protein sequence ID" value="EAU35911"/>
    <property type="gene ID" value="ATEG_04109"/>
</dbReference>
<dbReference type="GeneID" id="4318663"/>
<dbReference type="VEuPathDB" id="FungiDB:ATEG_04109"/>
<dbReference type="eggNOG" id="KOG3342">
    <property type="taxonomic scope" value="Eukaryota"/>
</dbReference>
<dbReference type="HOGENOM" id="CLU_089996_0_0_1"/>
<dbReference type="OMA" id="ILMNEYP"/>
<dbReference type="OrthoDB" id="10257561at2759"/>
<dbReference type="Proteomes" id="UP000007963">
    <property type="component" value="Unassembled WGS sequence"/>
</dbReference>
<dbReference type="GO" id="GO:0005787">
    <property type="term" value="C:signal peptidase complex"/>
    <property type="evidence" value="ECO:0007669"/>
    <property type="project" value="EnsemblFungi"/>
</dbReference>
<dbReference type="GO" id="GO:0004252">
    <property type="term" value="F:serine-type endopeptidase activity"/>
    <property type="evidence" value="ECO:0007669"/>
    <property type="project" value="UniProtKB-EC"/>
</dbReference>
<dbReference type="GO" id="GO:0045047">
    <property type="term" value="P:protein targeting to ER"/>
    <property type="evidence" value="ECO:0007669"/>
    <property type="project" value="EnsemblFungi"/>
</dbReference>
<dbReference type="GO" id="GO:0006465">
    <property type="term" value="P:signal peptide processing"/>
    <property type="evidence" value="ECO:0007669"/>
    <property type="project" value="EnsemblFungi"/>
</dbReference>
<dbReference type="CDD" id="cd06530">
    <property type="entry name" value="S26_SPase_I"/>
    <property type="match status" value="1"/>
</dbReference>
<dbReference type="InterPro" id="IPR036286">
    <property type="entry name" value="LexA/Signal_pep-like_sf"/>
</dbReference>
<dbReference type="InterPro" id="IPR019756">
    <property type="entry name" value="Pept_S26A_signal_pept_1_Ser-AS"/>
</dbReference>
<dbReference type="InterPro" id="IPR015927">
    <property type="entry name" value="Peptidase_S24_S26A/B/C"/>
</dbReference>
<dbReference type="InterPro" id="IPR019533">
    <property type="entry name" value="Peptidase_S26"/>
</dbReference>
<dbReference type="InterPro" id="IPR001733">
    <property type="entry name" value="Peptidase_S26B"/>
</dbReference>
<dbReference type="NCBIfam" id="TIGR02228">
    <property type="entry name" value="sigpep_I_arch"/>
    <property type="match status" value="1"/>
</dbReference>
<dbReference type="PANTHER" id="PTHR10806">
    <property type="entry name" value="SIGNAL PEPTIDASE COMPLEX CATALYTIC SUBUNIT SEC11"/>
    <property type="match status" value="1"/>
</dbReference>
<dbReference type="PANTHER" id="PTHR10806:SF6">
    <property type="entry name" value="SIGNAL PEPTIDASE COMPLEX CATALYTIC SUBUNIT SEC11"/>
    <property type="match status" value="1"/>
</dbReference>
<dbReference type="Pfam" id="PF00717">
    <property type="entry name" value="Peptidase_S24"/>
    <property type="match status" value="1"/>
</dbReference>
<dbReference type="PRINTS" id="PR00728">
    <property type="entry name" value="SIGNALPTASE"/>
</dbReference>
<dbReference type="SUPFAM" id="SSF51306">
    <property type="entry name" value="LexA/Signal peptidase"/>
    <property type="match status" value="1"/>
</dbReference>
<dbReference type="PROSITE" id="PS00501">
    <property type="entry name" value="SPASE_I_1"/>
    <property type="match status" value="1"/>
</dbReference>
<proteinExistence type="inferred from homology"/>
<gene>
    <name type="primary">sec11</name>
    <name type="ORF">ATEG_04109</name>
</gene>
<protein>
    <recommendedName>
        <fullName>Signal peptidase complex catalytic subunit sec11</fullName>
        <ecNumber evidence="1">3.4.21.89</ecNumber>
    </recommendedName>
    <alternativeName>
        <fullName>Signal peptidase I</fullName>
    </alternativeName>
</protein>
<feature type="chain" id="PRO_0000412318" description="Signal peptidase complex catalytic subunit sec11">
    <location>
        <begin position="1"/>
        <end position="191"/>
    </location>
</feature>
<feature type="topological domain" description="Cytoplasmic" evidence="3">
    <location>
        <begin position="1"/>
        <end position="14"/>
    </location>
</feature>
<feature type="transmembrane region" description="Helical; Signal-anchor for type II membrane protein" evidence="3">
    <location>
        <begin position="15"/>
        <end position="33"/>
    </location>
</feature>
<feature type="topological domain" description="Lumenal" evidence="3">
    <location>
        <begin position="34"/>
        <end position="191"/>
    </location>
</feature>
<feature type="region of interest" description="C-terminal short (CTS) helix" evidence="2">
    <location>
        <begin position="177"/>
        <end position="188"/>
    </location>
</feature>
<feature type="active site" description="Charge relay system" evidence="1">
    <location>
        <position position="53"/>
    </location>
</feature>
<feature type="active site" description="Charge relay system" evidence="1">
    <location>
        <position position="92"/>
    </location>
</feature>
<feature type="active site" description="Charge relay system" evidence="1">
    <location>
        <position position="133"/>
    </location>
</feature>
<organism>
    <name type="scientific">Aspergillus terreus (strain NIH 2624 / FGSC A1156)</name>
    <dbReference type="NCBI Taxonomy" id="341663"/>
    <lineage>
        <taxon>Eukaryota</taxon>
        <taxon>Fungi</taxon>
        <taxon>Dikarya</taxon>
        <taxon>Ascomycota</taxon>
        <taxon>Pezizomycotina</taxon>
        <taxon>Eurotiomycetes</taxon>
        <taxon>Eurotiomycetidae</taxon>
        <taxon>Eurotiales</taxon>
        <taxon>Aspergillaceae</taxon>
        <taxon>Aspergillus</taxon>
        <taxon>Aspergillus subgen. Circumdati</taxon>
    </lineage>
</organism>
<accession>Q0CQC5</accession>
<reference key="1">
    <citation type="submission" date="2005-09" db="EMBL/GenBank/DDBJ databases">
        <title>Annotation of the Aspergillus terreus NIH2624 genome.</title>
        <authorList>
            <person name="Birren B.W."/>
            <person name="Lander E.S."/>
            <person name="Galagan J.E."/>
            <person name="Nusbaum C."/>
            <person name="Devon K."/>
            <person name="Henn M."/>
            <person name="Ma L.-J."/>
            <person name="Jaffe D.B."/>
            <person name="Butler J."/>
            <person name="Alvarez P."/>
            <person name="Gnerre S."/>
            <person name="Grabherr M."/>
            <person name="Kleber M."/>
            <person name="Mauceli E.W."/>
            <person name="Brockman W."/>
            <person name="Rounsley S."/>
            <person name="Young S.K."/>
            <person name="LaButti K."/>
            <person name="Pushparaj V."/>
            <person name="DeCaprio D."/>
            <person name="Crawford M."/>
            <person name="Koehrsen M."/>
            <person name="Engels R."/>
            <person name="Montgomery P."/>
            <person name="Pearson M."/>
            <person name="Howarth C."/>
            <person name="Larson L."/>
            <person name="Luoma S."/>
            <person name="White J."/>
            <person name="Alvarado L."/>
            <person name="Kodira C.D."/>
            <person name="Zeng Q."/>
            <person name="Oleary S."/>
            <person name="Yandava C."/>
            <person name="Denning D.W."/>
            <person name="Nierman W.C."/>
            <person name="Milne T."/>
            <person name="Madden K."/>
        </authorList>
    </citation>
    <scope>NUCLEOTIDE SEQUENCE [LARGE SCALE GENOMIC DNA]</scope>
    <source>
        <strain>NIH 2624 / FGSC A1156</strain>
    </source>
</reference>
<name>SEC11_ASPTN</name>